<keyword id="KW-0165">Cleavage on pair of basic residues</keyword>
<keyword id="KW-0903">Direct protein sequencing</keyword>
<keyword id="KW-1015">Disulfide bond</keyword>
<keyword id="KW-0960">Knottin</keyword>
<keyword id="KW-0528">Neurotoxin</keyword>
<keyword id="KW-0964">Secreted</keyword>
<keyword id="KW-0732">Signal</keyword>
<keyword id="KW-0800">Toxin</keyword>
<comment type="function">
    <text>Elicits an uncoordinated twisting syndrome when injected into C.elegans, but has no effect on mice.</text>
</comment>
<comment type="subcellular location">
    <subcellularLocation>
        <location>Secreted</location>
    </subcellularLocation>
</comment>
<comment type="tissue specificity">
    <text>Expressed by the venom duct.</text>
</comment>
<comment type="domain">
    <text evidence="1">The presence of a 'disulfide through disulfide knot' structurally defines this protein as a knottin.</text>
</comment>
<comment type="domain">
    <text>The cysteine framework is VI/VII (C-C-CC-C-C).</text>
</comment>
<comment type="mass spectrometry" mass="4290.2" method="Electrospray" evidence="3"/>
<comment type="mass spectrometry" mass="4291.4" method="MALDI" evidence="3"/>
<organism>
    <name type="scientific">Terebra subulata</name>
    <name type="common">Chocolate spotted auger</name>
    <name type="synonym">Buccinum subulatum</name>
    <dbReference type="NCBI Taxonomy" id="89435"/>
    <lineage>
        <taxon>Eukaryota</taxon>
        <taxon>Metazoa</taxon>
        <taxon>Spiralia</taxon>
        <taxon>Lophotrochozoa</taxon>
        <taxon>Mollusca</taxon>
        <taxon>Gastropoda</taxon>
        <taxon>Caenogastropoda</taxon>
        <taxon>Neogastropoda</taxon>
        <taxon>Conoidea</taxon>
        <taxon>Terebridae</taxon>
        <taxon>Terebra</taxon>
    </lineage>
</organism>
<feature type="signal peptide" evidence="2">
    <location>
        <begin position="1"/>
        <end position="20"/>
    </location>
</feature>
<feature type="propeptide" id="PRO_0000249195" evidence="3">
    <location>
        <begin position="21"/>
        <end position="29"/>
    </location>
</feature>
<feature type="chain" id="PRO_0000249196" description="Augerpeptide-s7a">
    <location>
        <begin position="30"/>
        <end position="69"/>
    </location>
</feature>
<feature type="disulfide bond" evidence="1">
    <location>
        <begin position="36"/>
        <end position="48"/>
    </location>
</feature>
<feature type="disulfide bond" evidence="1">
    <location>
        <begin position="42"/>
        <end position="65"/>
    </location>
</feature>
<feature type="disulfide bond" evidence="1">
    <location>
        <begin position="47"/>
        <end position="68"/>
    </location>
</feature>
<feature type="non-consecutive residues" evidence="4">
    <location>
        <begin position="25"/>
        <end position="26"/>
    </location>
</feature>
<name>AX7A_TERSU</name>
<accession>P0C1T7</accession>
<evidence type="ECO:0000250" key="1"/>
<evidence type="ECO:0000255" key="2"/>
<evidence type="ECO:0000269" key="3">
    <source>
    </source>
</evidence>
<evidence type="ECO:0000305" key="4"/>
<reference key="1">
    <citation type="journal article" date="2003" name="Toxicon">
        <title>The augertoxins: biochemical characterization of venom components from the toxoglossate gastropod Terebra subulata.</title>
        <authorList>
            <person name="Imperial J.S."/>
            <person name="Watkins M."/>
            <person name="Chen P."/>
            <person name="Hillyard D.R."/>
            <person name="Cruz L.J."/>
            <person name="Olivera B.M."/>
        </authorList>
    </citation>
    <scope>NUCLEOTIDE SEQUENCE [MRNA]</scope>
    <scope>PROTEIN SEQUENCE OF 30-69</scope>
    <scope>MASS SPECTROMETRY</scope>
    <source>
        <tissue>Venom</tissue>
        <tissue>Venom duct</tissue>
    </source>
</reference>
<sequence length="71" mass="7722">MSALKFVLICGLVLLLIETIPGVSLNLMRATNRHQCDTNDDCEEDECCVLVGGNVNNPGVQTRICLACSRK</sequence>
<protein>
    <recommendedName>
        <fullName>Augerpeptide-s7a</fullName>
        <shortName>Agx-s7a</shortName>
    </recommendedName>
</protein>
<dbReference type="GO" id="GO:0005576">
    <property type="term" value="C:extracellular region"/>
    <property type="evidence" value="ECO:0007669"/>
    <property type="project" value="UniProtKB-SubCell"/>
</dbReference>
<dbReference type="GO" id="GO:0090729">
    <property type="term" value="F:toxin activity"/>
    <property type="evidence" value="ECO:0007669"/>
    <property type="project" value="UniProtKB-KW"/>
</dbReference>
<proteinExistence type="evidence at protein level"/>